<evidence type="ECO:0000250" key="1">
    <source>
        <dbReference type="UniProtKB" id="P40857"/>
    </source>
</evidence>
<evidence type="ECO:0000250" key="2">
    <source>
        <dbReference type="UniProtKB" id="Q5VWC8"/>
    </source>
</evidence>
<evidence type="ECO:0000250" key="3">
    <source>
        <dbReference type="UniProtKB" id="Q9P035"/>
    </source>
</evidence>
<evidence type="ECO:0000255" key="4"/>
<evidence type="ECO:0000305" key="5"/>
<gene>
    <name evidence="5" type="primary">hacd4</name>
    <name evidence="5" type="synonym">hacd</name>
    <name evidence="5" type="synonym">ptplad2</name>
</gene>
<name>HACD4_XENLA</name>
<dbReference type="EC" id="4.2.1.134" evidence="3"/>
<dbReference type="EMBL" id="BC073600">
    <property type="protein sequence ID" value="AAH73600.1"/>
    <property type="molecule type" value="mRNA"/>
</dbReference>
<dbReference type="UniPathway" id="UPA00094"/>
<dbReference type="Proteomes" id="UP000186698">
    <property type="component" value="Unplaced"/>
</dbReference>
<dbReference type="GO" id="GO:0005783">
    <property type="term" value="C:endoplasmic reticulum"/>
    <property type="evidence" value="ECO:0000250"/>
    <property type="project" value="UniProtKB"/>
</dbReference>
<dbReference type="GO" id="GO:0005789">
    <property type="term" value="C:endoplasmic reticulum membrane"/>
    <property type="evidence" value="ECO:0000318"/>
    <property type="project" value="GO_Central"/>
</dbReference>
<dbReference type="GO" id="GO:0018812">
    <property type="term" value="F:3-hydroxyacyl-CoA dehydratase activity"/>
    <property type="evidence" value="ECO:0000318"/>
    <property type="project" value="GO_Central"/>
</dbReference>
<dbReference type="GO" id="GO:0019899">
    <property type="term" value="F:enzyme binding"/>
    <property type="evidence" value="ECO:0000250"/>
    <property type="project" value="UniProtKB"/>
</dbReference>
<dbReference type="GO" id="GO:0102158">
    <property type="term" value="F:very-long-chain (3R)-3-hydroxyacyl-CoA dehydratase activity"/>
    <property type="evidence" value="ECO:0000250"/>
    <property type="project" value="UniProtKB"/>
</dbReference>
<dbReference type="GO" id="GO:0030497">
    <property type="term" value="P:fatty acid elongation"/>
    <property type="evidence" value="ECO:0000250"/>
    <property type="project" value="UniProtKB"/>
</dbReference>
<dbReference type="GO" id="GO:0030148">
    <property type="term" value="P:sphingolipid biosynthetic process"/>
    <property type="evidence" value="ECO:0000318"/>
    <property type="project" value="GO_Central"/>
</dbReference>
<dbReference type="GO" id="GO:0042761">
    <property type="term" value="P:very long-chain fatty acid biosynthetic process"/>
    <property type="evidence" value="ECO:0000250"/>
    <property type="project" value="UniProtKB"/>
</dbReference>
<dbReference type="InterPro" id="IPR007482">
    <property type="entry name" value="Tyr_Pase-like_PTPLA"/>
</dbReference>
<dbReference type="PANTHER" id="PTHR11035">
    <property type="entry name" value="VERY-LONG-CHAIN (3R)-3-HYDROXYACYL-COA DEHYDRATASE"/>
    <property type="match status" value="1"/>
</dbReference>
<dbReference type="PANTHER" id="PTHR11035:SF16">
    <property type="entry name" value="VERY-LONG-CHAIN (3R)-3-HYDROXYACYL-COA DEHYDRATASE 4"/>
    <property type="match status" value="1"/>
</dbReference>
<dbReference type="Pfam" id="PF04387">
    <property type="entry name" value="PTPLA"/>
    <property type="match status" value="1"/>
</dbReference>
<protein>
    <recommendedName>
        <fullName evidence="5">Very-long-chain (3R)-3-hydroxyacyl-CoA dehydratase</fullName>
        <ecNumber evidence="3">4.2.1.134</ecNumber>
    </recommendedName>
    <alternativeName>
        <fullName evidence="5">3-hydroxyacyl-CoA dehydratase</fullName>
        <shortName evidence="5">HACD</shortName>
    </alternativeName>
    <alternativeName>
        <fullName evidence="5">Protein-tyrosine phosphatase-like A domain-containing protein 2</fullName>
    </alternativeName>
</protein>
<proteinExistence type="evidence at transcript level"/>
<sequence>MKTYLSIYYLIQFCGHSWIFTNMTTRFLFFGQDAFADTFYSIGLVMQGCQLLSILELAHILLGVEQNGFLPMFLQVAERFIILFVVITSQEEVQSKYIVCALFFIWNLWDVIRYPYDMLAAVDTDYSALTWLRHTWWIVAYPLSVLAEAYTIYESLPYFESLGTYSFKMALPVSLSFHFPYILTLYLVLQPVGMLYICSCLWSERKQYFQRKLKLKKN</sequence>
<organism>
    <name type="scientific">Xenopus laevis</name>
    <name type="common">African clawed frog</name>
    <dbReference type="NCBI Taxonomy" id="8355"/>
    <lineage>
        <taxon>Eukaryota</taxon>
        <taxon>Metazoa</taxon>
        <taxon>Chordata</taxon>
        <taxon>Craniata</taxon>
        <taxon>Vertebrata</taxon>
        <taxon>Euteleostomi</taxon>
        <taxon>Amphibia</taxon>
        <taxon>Batrachia</taxon>
        <taxon>Anura</taxon>
        <taxon>Pipoidea</taxon>
        <taxon>Pipidae</taxon>
        <taxon>Xenopodinae</taxon>
        <taxon>Xenopus</taxon>
        <taxon>Xenopus</taxon>
    </lineage>
</organism>
<keyword id="KW-0256">Endoplasmic reticulum</keyword>
<keyword id="KW-0275">Fatty acid biosynthesis</keyword>
<keyword id="KW-0276">Fatty acid metabolism</keyword>
<keyword id="KW-0444">Lipid biosynthesis</keyword>
<keyword id="KW-0443">Lipid metabolism</keyword>
<keyword id="KW-0456">Lyase</keyword>
<keyword id="KW-0472">Membrane</keyword>
<keyword id="KW-1185">Reference proteome</keyword>
<keyword id="KW-0812">Transmembrane</keyword>
<keyword id="KW-1133">Transmembrane helix</keyword>
<comment type="function">
    <text evidence="2">Catalyzes the third of the four reactions of the long-chain fatty acids elongation cycle. This endoplasmic reticulum-bound enzymatic process, allows the addition of two carbons to the chain of long- and very long-chain fatty acids/VLCFAs per cycle. This enzyme catalyzes the dehydration of the 3-hydroxyacyl-CoA intermediate into trans-2,3-enoyl-CoA, within each cycle of fatty acid elongation. Thereby, it participates in the production of VLCFAs of different chain lengths that are involved in multiple biological processes as precursors of membrane lipids and lipid mediators.</text>
</comment>
<comment type="catalytic activity">
    <reaction evidence="2">
        <text>a very-long-chain (3R)-3-hydroxyacyl-CoA = a very-long-chain (2E)-enoyl-CoA + H2O</text>
        <dbReference type="Rhea" id="RHEA:45812"/>
        <dbReference type="ChEBI" id="CHEBI:15377"/>
        <dbReference type="ChEBI" id="CHEBI:83728"/>
        <dbReference type="ChEBI" id="CHEBI:85440"/>
        <dbReference type="EC" id="4.2.1.134"/>
    </reaction>
    <physiologicalReaction direction="left-to-right" evidence="2">
        <dbReference type="Rhea" id="RHEA:45813"/>
    </physiologicalReaction>
</comment>
<comment type="catalytic activity">
    <reaction evidence="2">
        <text>(3R)-hydroxyhexadecanoyl-CoA = (2E)-hexadecenoyl-CoA + H2O</text>
        <dbReference type="Rhea" id="RHEA:39159"/>
        <dbReference type="ChEBI" id="CHEBI:15377"/>
        <dbReference type="ChEBI" id="CHEBI:61526"/>
        <dbReference type="ChEBI" id="CHEBI:74278"/>
    </reaction>
    <physiologicalReaction direction="left-to-right" evidence="2">
        <dbReference type="Rhea" id="RHEA:39160"/>
    </physiologicalReaction>
</comment>
<comment type="pathway">
    <text evidence="2">Lipid metabolism; fatty acid biosynthesis.</text>
</comment>
<comment type="subcellular location">
    <subcellularLocation>
        <location evidence="2">Endoplasmic reticulum membrane</location>
        <topology evidence="2">Multi-pass membrane protein</topology>
    </subcellularLocation>
</comment>
<comment type="similarity">
    <text evidence="5">Belongs to the very long-chain fatty acids dehydratase HACD family.</text>
</comment>
<comment type="caution">
    <text evidence="2">Shares some similarity with tyrosine phosphatase proteins but it has probably no phosphatase activity.</text>
</comment>
<reference key="1">
    <citation type="submission" date="2004-06" db="EMBL/GenBank/DDBJ databases">
        <authorList>
            <consortium name="NIH - Xenopus Gene Collection (XGC) project"/>
        </authorList>
    </citation>
    <scope>NUCLEOTIDE SEQUENCE [LARGE SCALE MRNA]</scope>
    <source>
        <tissue>Spleen</tissue>
    </source>
</reference>
<feature type="chain" id="PRO_0000313732" description="Very-long-chain (3R)-3-hydroxyacyl-CoA dehydratase">
    <location>
        <begin position="1"/>
        <end position="218"/>
    </location>
</feature>
<feature type="topological domain" description="Cytoplasmic" evidence="4">
    <location>
        <begin position="1"/>
        <end position="6"/>
    </location>
</feature>
<feature type="transmembrane region" description="Helical" evidence="4">
    <location>
        <begin position="7"/>
        <end position="29"/>
    </location>
</feature>
<feature type="topological domain" description="Lumenal" evidence="4">
    <location>
        <begin position="30"/>
        <end position="38"/>
    </location>
</feature>
<feature type="transmembrane region" description="Helical" evidence="4">
    <location>
        <begin position="39"/>
        <end position="61"/>
    </location>
</feature>
<feature type="topological domain" description="Cytoplasmic" evidence="4">
    <location>
        <begin position="62"/>
        <end position="67"/>
    </location>
</feature>
<feature type="transmembrane region" description="Helical" evidence="4">
    <location>
        <begin position="68"/>
        <end position="87"/>
    </location>
</feature>
<feature type="topological domain" description="Lumenal" evidence="4">
    <location>
        <begin position="88"/>
        <end position="96"/>
    </location>
</feature>
<feature type="transmembrane region" description="Helical" evidence="4">
    <location>
        <begin position="97"/>
        <end position="116"/>
    </location>
</feature>
<feature type="topological domain" description="Cytoplasmic" evidence="4">
    <location>
        <begin position="117"/>
        <end position="136"/>
    </location>
</feature>
<feature type="transmembrane region" description="Helical" evidence="4">
    <location>
        <begin position="137"/>
        <end position="159"/>
    </location>
</feature>
<feature type="topological domain" description="Lumenal" evidence="4">
    <location>
        <begin position="160"/>
        <end position="178"/>
    </location>
</feature>
<feature type="transmembrane region" description="Helical" evidence="4">
    <location>
        <begin position="179"/>
        <end position="201"/>
    </location>
</feature>
<feature type="topological domain" description="Cytoplasmic" evidence="4">
    <location>
        <begin position="202"/>
        <end position="218"/>
    </location>
</feature>
<feature type="active site" evidence="1">
    <location>
        <position position="141"/>
    </location>
</feature>
<feature type="active site" evidence="1">
    <location>
        <position position="148"/>
    </location>
</feature>
<accession>Q6GNB5</accession>